<evidence type="ECO:0000255" key="1">
    <source>
        <dbReference type="PROSITE-ProRule" id="PRU00602"/>
    </source>
</evidence>
<evidence type="ECO:0000269" key="2">
    <source>
    </source>
</evidence>
<evidence type="ECO:0000269" key="3">
    <source>
    </source>
</evidence>
<evidence type="ECO:0000269" key="4">
    <source>
    </source>
</evidence>
<evidence type="ECO:0000269" key="5">
    <source>
    </source>
</evidence>
<evidence type="ECO:0000269" key="6">
    <source>
    </source>
</evidence>
<evidence type="ECO:0000269" key="7">
    <source>
    </source>
</evidence>
<evidence type="ECO:0000269" key="8">
    <source>
    </source>
</evidence>
<evidence type="ECO:0000269" key="9">
    <source>
    </source>
</evidence>
<evidence type="ECO:0000305" key="10"/>
<evidence type="ECO:0000305" key="11">
    <source>
    </source>
</evidence>
<evidence type="ECO:0007744" key="12">
    <source>
        <dbReference type="PDB" id="8ESD"/>
    </source>
</evidence>
<evidence type="ECO:0007744" key="13">
    <source>
        <dbReference type="PDB" id="8F2R"/>
    </source>
</evidence>
<evidence type="ECO:0007744" key="14">
    <source>
        <dbReference type="PDB" id="8F2U"/>
    </source>
</evidence>
<evidence type="ECO:0007744" key="15">
    <source>
        <dbReference type="PDB" id="8P0W"/>
    </source>
</evidence>
<evidence type="ECO:0007744" key="16">
    <source>
    </source>
</evidence>
<evidence type="ECO:0007829" key="17">
    <source>
        <dbReference type="PDB" id="4OE9"/>
    </source>
</evidence>
<evidence type="ECO:0007829" key="18">
    <source>
        <dbReference type="PDB" id="6BP6"/>
    </source>
</evidence>
<evidence type="ECO:0007829" key="19">
    <source>
        <dbReference type="PDB" id="8P0W"/>
    </source>
</evidence>
<accession>Q9P000</accession>
<accession>E9PAN2</accession>
<accession>Q96FI2</accession>
<accession>Q9H0R0</accession>
<organism>
    <name type="scientific">Homo sapiens</name>
    <name type="common">Human</name>
    <dbReference type="NCBI Taxonomy" id="9606"/>
    <lineage>
        <taxon>Eukaryota</taxon>
        <taxon>Metazoa</taxon>
        <taxon>Chordata</taxon>
        <taxon>Craniata</taxon>
        <taxon>Vertebrata</taxon>
        <taxon>Euteleostomi</taxon>
        <taxon>Mammalia</taxon>
        <taxon>Eutheria</taxon>
        <taxon>Euarchontoglires</taxon>
        <taxon>Primates</taxon>
        <taxon>Haplorrhini</taxon>
        <taxon>Catarrhini</taxon>
        <taxon>Hominidae</taxon>
        <taxon>Homo</taxon>
    </lineage>
</organism>
<gene>
    <name type="primary">COMMD9</name>
    <name type="ORF">HSPC166</name>
</gene>
<feature type="initiator methionine" description="Removed" evidence="16">
    <location>
        <position position="1"/>
    </location>
</feature>
<feature type="chain" id="PRO_0000077403" description="COMM domain-containing protein 9">
    <location>
        <begin position="2"/>
        <end position="198"/>
    </location>
</feature>
<feature type="domain" description="COMM" evidence="1">
    <location>
        <begin position="122"/>
        <end position="196"/>
    </location>
</feature>
<feature type="modified residue" description="N-acetylalanine" evidence="16">
    <location>
        <position position="2"/>
    </location>
</feature>
<feature type="splice variant" id="VSP_041499" description="In isoform 2." evidence="10">
    <location>
        <begin position="18"/>
        <end position="59"/>
    </location>
</feature>
<feature type="sequence conflict" description="In Ref. 3; CAB66623." evidence="10" ref="3">
    <original>V</original>
    <variation>F</variation>
    <location>
        <position position="45"/>
    </location>
</feature>
<feature type="sequence conflict" description="In Ref. 1; AAS22246 and 2; AAF29130." evidence="10" ref="1 2">
    <original>G</original>
    <variation>R</variation>
    <location>
        <position position="161"/>
    </location>
</feature>
<feature type="helix" evidence="17">
    <location>
        <begin position="6"/>
        <end position="12"/>
    </location>
</feature>
<feature type="helix" evidence="17">
    <location>
        <begin position="13"/>
        <end position="17"/>
    </location>
</feature>
<feature type="helix" evidence="17">
    <location>
        <begin position="21"/>
        <end position="33"/>
    </location>
</feature>
<feature type="helix" evidence="17">
    <location>
        <begin position="36"/>
        <end position="42"/>
    </location>
</feature>
<feature type="helix" evidence="17">
    <location>
        <begin position="43"/>
        <end position="50"/>
    </location>
</feature>
<feature type="helix" evidence="17">
    <location>
        <begin position="54"/>
        <end position="74"/>
    </location>
</feature>
<feature type="helix" evidence="17">
    <location>
        <begin position="79"/>
        <end position="83"/>
    </location>
</feature>
<feature type="helix" evidence="17">
    <location>
        <begin position="92"/>
        <end position="114"/>
    </location>
</feature>
<feature type="strand" evidence="18">
    <location>
        <begin position="122"/>
        <end position="133"/>
    </location>
</feature>
<feature type="strand" evidence="18">
    <location>
        <begin position="144"/>
        <end position="154"/>
    </location>
</feature>
<feature type="helix" evidence="19">
    <location>
        <begin position="157"/>
        <end position="160"/>
    </location>
</feature>
<feature type="strand" evidence="18">
    <location>
        <begin position="167"/>
        <end position="173"/>
    </location>
</feature>
<feature type="helix" evidence="18">
    <location>
        <begin position="175"/>
        <end position="198"/>
    </location>
</feature>
<reference key="1">
    <citation type="journal article" date="2005" name="J. Biol. Chem.">
        <title>COMMD proteins, a novel family of structural and functional homologs of MURR1.</title>
        <authorList>
            <person name="Burstein E."/>
            <person name="Hoberg J.E."/>
            <person name="Wilkinson A.S."/>
            <person name="Rumble J.M."/>
            <person name="Csomos R.A."/>
            <person name="Komarck C.M."/>
            <person name="Maine G.N."/>
            <person name="Wilkinson J.C."/>
            <person name="Mayo M.W."/>
            <person name="Duckett C.S."/>
        </authorList>
    </citation>
    <scope>NUCLEOTIDE SEQUENCE [MRNA] (ISOFORM 1)</scope>
    <scope>FUNCTION</scope>
    <scope>INTERACTION WITH RELB AND NFKB1</scope>
    <scope>TISSUE SPECIFICITY</scope>
</reference>
<reference key="2">
    <citation type="journal article" date="2000" name="Genome Res.">
        <title>Cloning and functional analysis of cDNAs with open reading frames for 300 previously undefined genes expressed in CD34+ hematopoietic stem/progenitor cells.</title>
        <authorList>
            <person name="Zhang Q.-H."/>
            <person name="Ye M."/>
            <person name="Wu X.-Y."/>
            <person name="Ren S.-X."/>
            <person name="Zhao M."/>
            <person name="Zhao C.-J."/>
            <person name="Fu G."/>
            <person name="Shen Y."/>
            <person name="Fan H.-Y."/>
            <person name="Lu G."/>
            <person name="Zhong M."/>
            <person name="Xu X.-R."/>
            <person name="Han Z.-G."/>
            <person name="Zhang J.-W."/>
            <person name="Tao J."/>
            <person name="Huang Q.-H."/>
            <person name="Zhou J."/>
            <person name="Hu G.-X."/>
            <person name="Gu J."/>
            <person name="Chen S.-J."/>
            <person name="Chen Z."/>
        </authorList>
    </citation>
    <scope>NUCLEOTIDE SEQUENCE [LARGE SCALE MRNA] (ISOFORM 1)</scope>
    <source>
        <tissue>Umbilical cord blood</tissue>
    </source>
</reference>
<reference key="3">
    <citation type="journal article" date="2001" name="Genome Res.">
        <title>Towards a catalog of human genes and proteins: sequencing and analysis of 500 novel complete protein coding human cDNAs.</title>
        <authorList>
            <person name="Wiemann S."/>
            <person name="Weil B."/>
            <person name="Wellenreuther R."/>
            <person name="Gassenhuber J."/>
            <person name="Glassl S."/>
            <person name="Ansorge W."/>
            <person name="Boecher M."/>
            <person name="Bloecker H."/>
            <person name="Bauersachs S."/>
            <person name="Blum H."/>
            <person name="Lauber J."/>
            <person name="Duesterhoeft A."/>
            <person name="Beyer A."/>
            <person name="Koehrer K."/>
            <person name="Strack N."/>
            <person name="Mewes H.-W."/>
            <person name="Ottenwaelder B."/>
            <person name="Obermaier B."/>
            <person name="Tampe J."/>
            <person name="Heubner D."/>
            <person name="Wambutt R."/>
            <person name="Korn B."/>
            <person name="Klein M."/>
            <person name="Poustka A."/>
        </authorList>
    </citation>
    <scope>NUCLEOTIDE SEQUENCE [LARGE SCALE MRNA] (ISOFORM 1)</scope>
    <source>
        <tissue>Brain</tissue>
    </source>
</reference>
<reference key="4">
    <citation type="journal article" date="2006" name="Nature">
        <title>Human chromosome 11 DNA sequence and analysis including novel gene identification.</title>
        <authorList>
            <person name="Taylor T.D."/>
            <person name="Noguchi H."/>
            <person name="Totoki Y."/>
            <person name="Toyoda A."/>
            <person name="Kuroki Y."/>
            <person name="Dewar K."/>
            <person name="Lloyd C."/>
            <person name="Itoh T."/>
            <person name="Takeda T."/>
            <person name="Kim D.-W."/>
            <person name="She X."/>
            <person name="Barlow K.F."/>
            <person name="Bloom T."/>
            <person name="Bruford E."/>
            <person name="Chang J.L."/>
            <person name="Cuomo C.A."/>
            <person name="Eichler E."/>
            <person name="FitzGerald M.G."/>
            <person name="Jaffe D.B."/>
            <person name="LaButti K."/>
            <person name="Nicol R."/>
            <person name="Park H.-S."/>
            <person name="Seaman C."/>
            <person name="Sougnez C."/>
            <person name="Yang X."/>
            <person name="Zimmer A.R."/>
            <person name="Zody M.C."/>
            <person name="Birren B.W."/>
            <person name="Nusbaum C."/>
            <person name="Fujiyama A."/>
            <person name="Hattori M."/>
            <person name="Rogers J."/>
            <person name="Lander E.S."/>
            <person name="Sakaki Y."/>
        </authorList>
    </citation>
    <scope>NUCLEOTIDE SEQUENCE [LARGE SCALE GENOMIC DNA]</scope>
</reference>
<reference key="5">
    <citation type="journal article" date="2004" name="Genome Res.">
        <title>The status, quality, and expansion of the NIH full-length cDNA project: the Mammalian Gene Collection (MGC).</title>
        <authorList>
            <consortium name="The MGC Project Team"/>
        </authorList>
    </citation>
    <scope>NUCLEOTIDE SEQUENCE [LARGE SCALE MRNA] (ISOFORM 1)</scope>
    <source>
        <tissue>Skin</tissue>
    </source>
</reference>
<reference key="6">
    <citation type="journal article" date="2011" name="BMC Syst. Biol.">
        <title>Initial characterization of the human central proteome.</title>
        <authorList>
            <person name="Burkard T.R."/>
            <person name="Planyavsky M."/>
            <person name="Kaupe I."/>
            <person name="Breitwieser F.P."/>
            <person name="Buerckstuemmer T."/>
            <person name="Bennett K.L."/>
            <person name="Superti-Furga G."/>
            <person name="Colinge J."/>
        </authorList>
    </citation>
    <scope>IDENTIFICATION BY MASS SPECTROMETRY [LARGE SCALE ANALYSIS]</scope>
</reference>
<reference key="7">
    <citation type="journal article" date="2011" name="J. Biol. Chem.">
        <title>COMMD1 (copper metabolism MURR1 domain-containing protein 1) regulates Cullin RING ligases by preventing CAND1 (Cullin-associated Nedd8-dissociated protein 1) binding.</title>
        <authorList>
            <person name="Mao X."/>
            <person name="Gluck N."/>
            <person name="Chen B."/>
            <person name="Starokadomskyy P."/>
            <person name="Li H."/>
            <person name="Maine G.N."/>
            <person name="Burstein E."/>
        </authorList>
    </citation>
    <scope>FUNCTION</scope>
    <scope>INTERACTION WITH CUL1</scope>
    <scope>SUBCELLULAR LOCATION</scope>
</reference>
<reference key="8">
    <citation type="journal article" date="2013" name="Am. J. Physiol.">
        <title>Functional interaction of COMMD3 and COMMD9 with the epithelial sodium channel.</title>
        <authorList>
            <person name="Liu Y.F."/>
            <person name="Swart M."/>
            <person name="Ke Y."/>
            <person name="Ly K."/>
            <person name="McDonald F.J."/>
        </authorList>
    </citation>
    <scope>INTERACTION WITH SCNN1B</scope>
</reference>
<reference key="9">
    <citation type="journal article" date="2013" name="J. Clin. Invest.">
        <title>CCDC22 deficiency in humans blunts activation of proinflammatory NF-kappaB signaling.</title>
        <authorList>
            <person name="Starokadomskyy P."/>
            <person name="Gluck N."/>
            <person name="Li H."/>
            <person name="Chen B."/>
            <person name="Wallis M."/>
            <person name="Maine G.N."/>
            <person name="Mao X."/>
            <person name="Zaidi I.W."/>
            <person name="Hein M.Y."/>
            <person name="McDonald F.J."/>
            <person name="Lenzner S."/>
            <person name="Zecha A."/>
            <person name="Ropers H.H."/>
            <person name="Kuss A.W."/>
            <person name="McGaughran J."/>
            <person name="Gecz J."/>
            <person name="Burstein E."/>
        </authorList>
    </citation>
    <scope>INTERACTION WITH CCDC22</scope>
</reference>
<reference key="10">
    <citation type="journal article" date="2015" name="Mol. Biol. Cell">
        <title>COMMD1 is linked to the WASH complex and regulates endosomal trafficking of the copper transporter ATP7A.</title>
        <authorList>
            <person name="Phillips-Krawczak C.A."/>
            <person name="Singla A."/>
            <person name="Starokadomskyy P."/>
            <person name="Deng Z."/>
            <person name="Osborne D.G."/>
            <person name="Li H."/>
            <person name="Dick C.J."/>
            <person name="Gomez T.S."/>
            <person name="Koenecke M."/>
            <person name="Zhang J.S."/>
            <person name="Dai H."/>
            <person name="Sifuentes-Dominguez L.F."/>
            <person name="Geng L.N."/>
            <person name="Kaufmann S.H."/>
            <person name="Hein M.Y."/>
            <person name="Wallis M."/>
            <person name="McGaughran J."/>
            <person name="Gecz J."/>
            <person name="van de Sluis B."/>
            <person name="Billadeau D.D."/>
            <person name="Burstein E."/>
        </authorList>
    </citation>
    <scope>INTERACTION WITH CCDC93</scope>
</reference>
<reference key="11">
    <citation type="journal article" date="2015" name="Proteomics">
        <title>N-terminome analysis of the human mitochondrial proteome.</title>
        <authorList>
            <person name="Vaca Jacome A.S."/>
            <person name="Rabilloud T."/>
            <person name="Schaeffer-Reiss C."/>
            <person name="Rompais M."/>
            <person name="Ayoub D."/>
            <person name="Lane L."/>
            <person name="Bairoch A."/>
            <person name="Van Dorsselaer A."/>
            <person name="Carapito C."/>
        </authorList>
    </citation>
    <scope>ACETYLATION [LARGE SCALE ANALYSIS] AT ALA-2</scope>
    <scope>CLEAVAGE OF INITIATOR METHIONINE [LARGE SCALE ANALYSIS]</scope>
    <scope>IDENTIFICATION BY MASS SPECTROMETRY [LARGE SCALE ANALYSIS]</scope>
</reference>
<reference key="12">
    <citation type="journal article" date="2017" name="Nat. Cell Biol.">
        <title>Retriever is a multiprotein complex for retromer-independent endosomal cargo recycling.</title>
        <authorList>
            <person name="McNally K.E."/>
            <person name="Faulkner R."/>
            <person name="Steinberg F."/>
            <person name="Gallon M."/>
            <person name="Ghai R."/>
            <person name="Pim D."/>
            <person name="Langton P."/>
            <person name="Pearson N."/>
            <person name="Danson C.M."/>
            <person name="Naegele H."/>
            <person name="Morris L.L."/>
            <person name="Singla A."/>
            <person name="Overlee B.L."/>
            <person name="Heesom K.J."/>
            <person name="Sessions R."/>
            <person name="Banks L."/>
            <person name="Collins B.M."/>
            <person name="Berger I."/>
            <person name="Billadeau D.D."/>
            <person name="Burstein E."/>
            <person name="Cullen P.J."/>
        </authorList>
    </citation>
    <scope>INTERACTION WITH CCDC22</scope>
</reference>
<reference evidence="12 13 14" key="13">
    <citation type="journal article" date="2023" name="Cell">
        <title>Structure of the endosomal commander complex linked to Ritscher-Schinzel syndrome.</title>
        <authorList>
            <person name="Healy M.D."/>
            <person name="McNally K.E."/>
            <person name="Butkovic R."/>
            <person name="Chilton M."/>
            <person name="Kato K."/>
            <person name="Sacharz J."/>
            <person name="McConville C."/>
            <person name="Moody E.R.R."/>
            <person name="Shaw S."/>
            <person name="Planelles-Herrero V.J."/>
            <person name="Yadav S.K.N."/>
            <person name="Ross J."/>
            <person name="Borucu U."/>
            <person name="Palmer C.S."/>
            <person name="Chen K.E."/>
            <person name="Croll T.I."/>
            <person name="Hall R.J."/>
            <person name="Caruana N.J."/>
            <person name="Ghai R."/>
            <person name="Nguyen T.H.D."/>
            <person name="Heesom K.J."/>
            <person name="Saitoh S."/>
            <person name="Berger I."/>
            <person name="Schaffitzel C."/>
            <person name="Williams T.A."/>
            <person name="Stroud D.A."/>
            <person name="Derivery E."/>
            <person name="Collins B.M."/>
            <person name="Cullen P.J."/>
        </authorList>
    </citation>
    <scope>STRUCTURE BY ELECTRON MICROSCOPY (3.12 ANGSTROMS) OF THE CCC COMPLEX</scope>
    <scope>FUNCTION</scope>
    <scope>SUBUNIT</scope>
</reference>
<reference evidence="15" key="14">
    <citation type="journal article" date="2024" name="Nat. Struct. Mol. Biol.">
        <title>Structure and interactions of the endogenous human commander complex.</title>
        <authorList>
            <person name="Laulumaa S."/>
            <person name="Kumpula E.P."/>
            <person name="Huiskonen J.T."/>
            <person name="Varjosalo M."/>
        </authorList>
    </citation>
    <scope>STRUCTURE BY ELECTRON MICROSCOPY (2.90 ANGSTROMS) OF THE CCC COMPLEX</scope>
    <scope>FUNCTION</scope>
    <scope>SUBUNIT</scope>
</reference>
<dbReference type="EMBL" id="AY542164">
    <property type="protein sequence ID" value="AAS22246.1"/>
    <property type="molecule type" value="mRNA"/>
</dbReference>
<dbReference type="EMBL" id="AF161515">
    <property type="protein sequence ID" value="AAF29130.1"/>
    <property type="molecule type" value="mRNA"/>
</dbReference>
<dbReference type="EMBL" id="AL136688">
    <property type="protein sequence ID" value="CAB66623.1"/>
    <property type="molecule type" value="mRNA"/>
</dbReference>
<dbReference type="EMBL" id="AC087277">
    <property type="status" value="NOT_ANNOTATED_CDS"/>
    <property type="molecule type" value="Genomic_DNA"/>
</dbReference>
<dbReference type="EMBL" id="BC010892">
    <property type="protein sequence ID" value="AAH10892.1"/>
    <property type="molecule type" value="mRNA"/>
</dbReference>
<dbReference type="CCDS" id="CCDS44571.1">
    <molecule id="Q9P000-2"/>
</dbReference>
<dbReference type="CCDS" id="CCDS7900.1">
    <molecule id="Q9P000-1"/>
</dbReference>
<dbReference type="RefSeq" id="NP_001095123.1">
    <molecule id="Q9P000-2"/>
    <property type="nucleotide sequence ID" value="NM_001101653.2"/>
</dbReference>
<dbReference type="RefSeq" id="NP_001294866.1">
    <property type="nucleotide sequence ID" value="NM_001307937.1"/>
</dbReference>
<dbReference type="RefSeq" id="NP_054905.2">
    <molecule id="Q9P000-1"/>
    <property type="nucleotide sequence ID" value="NM_014186.4"/>
</dbReference>
<dbReference type="PDB" id="4NKN">
    <property type="method" value="X-ray"/>
    <property type="resolution" value="2.79 A"/>
    <property type="chains" value="A/B/C/D/E/F=1-116"/>
</dbReference>
<dbReference type="PDB" id="4OE9">
    <property type="method" value="X-ray"/>
    <property type="resolution" value="1.55 A"/>
    <property type="chains" value="A/B=1-117"/>
</dbReference>
<dbReference type="PDB" id="6BP6">
    <property type="method" value="X-ray"/>
    <property type="resolution" value="2.17 A"/>
    <property type="chains" value="A/B=115-198"/>
</dbReference>
<dbReference type="PDB" id="8ESD">
    <property type="method" value="X-ray"/>
    <property type="resolution" value="3.33 A"/>
    <property type="chains" value="N=5-198"/>
</dbReference>
<dbReference type="PDB" id="8F2R">
    <property type="method" value="EM"/>
    <property type="resolution" value="3.12 A"/>
    <property type="chains" value="I=1-198"/>
</dbReference>
<dbReference type="PDB" id="8F2U">
    <property type="method" value="EM"/>
    <property type="resolution" value="3.53 A"/>
    <property type="chains" value="I=1-198"/>
</dbReference>
<dbReference type="PDB" id="8P0W">
    <property type="method" value="EM"/>
    <property type="resolution" value="2.90 A"/>
    <property type="chains" value="I=1-198"/>
</dbReference>
<dbReference type="PDBsum" id="4NKN"/>
<dbReference type="PDBsum" id="4OE9"/>
<dbReference type="PDBsum" id="6BP6"/>
<dbReference type="PDBsum" id="8ESD"/>
<dbReference type="PDBsum" id="8F2R"/>
<dbReference type="PDBsum" id="8F2U"/>
<dbReference type="PDBsum" id="8P0W"/>
<dbReference type="EMDB" id="EMD-17340"/>
<dbReference type="EMDB" id="EMD-17342"/>
<dbReference type="EMDB" id="EMD-28825"/>
<dbReference type="EMDB" id="EMD-28827"/>
<dbReference type="SMR" id="Q9P000"/>
<dbReference type="BioGRID" id="118867">
    <property type="interactions" value="46"/>
</dbReference>
<dbReference type="ComplexPortal" id="CPX-2211">
    <property type="entry name" value="Commander complex"/>
</dbReference>
<dbReference type="CORUM" id="Q9P000"/>
<dbReference type="FunCoup" id="Q9P000">
    <property type="interactions" value="1930"/>
</dbReference>
<dbReference type="IntAct" id="Q9P000">
    <property type="interactions" value="34"/>
</dbReference>
<dbReference type="STRING" id="9606.ENSP00000263401"/>
<dbReference type="GlyGen" id="Q9P000">
    <property type="glycosylation" value="1 site, 1 O-linked glycan (1 site)"/>
</dbReference>
<dbReference type="iPTMnet" id="Q9P000"/>
<dbReference type="PhosphoSitePlus" id="Q9P000"/>
<dbReference type="SwissPalm" id="Q9P000"/>
<dbReference type="BioMuta" id="COMMD9"/>
<dbReference type="DMDM" id="124056492"/>
<dbReference type="jPOST" id="Q9P000"/>
<dbReference type="MassIVE" id="Q9P000"/>
<dbReference type="PaxDb" id="9606-ENSP00000263401"/>
<dbReference type="PeptideAtlas" id="Q9P000"/>
<dbReference type="ProteomicsDB" id="83528">
    <molecule id="Q9P000-1"/>
</dbReference>
<dbReference type="ProteomicsDB" id="83529">
    <molecule id="Q9P000-2"/>
</dbReference>
<dbReference type="Pumba" id="Q9P000"/>
<dbReference type="Antibodypedia" id="2123">
    <property type="antibodies" value="163 antibodies from 20 providers"/>
</dbReference>
<dbReference type="DNASU" id="29099"/>
<dbReference type="Ensembl" id="ENST00000263401.10">
    <molecule id="Q9P000-1"/>
    <property type="protein sequence ID" value="ENSP00000263401.5"/>
    <property type="gene ID" value="ENSG00000110442.12"/>
</dbReference>
<dbReference type="Ensembl" id="ENST00000452374.6">
    <molecule id="Q9P000-2"/>
    <property type="protein sequence ID" value="ENSP00000392510.2"/>
    <property type="gene ID" value="ENSG00000110442.12"/>
</dbReference>
<dbReference type="GeneID" id="29099"/>
<dbReference type="KEGG" id="hsa:29099"/>
<dbReference type="MANE-Select" id="ENST00000263401.10">
    <property type="protein sequence ID" value="ENSP00000263401.5"/>
    <property type="RefSeq nucleotide sequence ID" value="NM_014186.4"/>
    <property type="RefSeq protein sequence ID" value="NP_054905.2"/>
</dbReference>
<dbReference type="UCSC" id="uc001mwn.5">
    <molecule id="Q9P000-1"/>
    <property type="organism name" value="human"/>
</dbReference>
<dbReference type="AGR" id="HGNC:25014"/>
<dbReference type="CTD" id="29099"/>
<dbReference type="DisGeNET" id="29099"/>
<dbReference type="GeneCards" id="COMMD9"/>
<dbReference type="HGNC" id="HGNC:25014">
    <property type="gene designation" value="COMMD9"/>
</dbReference>
<dbReference type="HPA" id="ENSG00000110442">
    <property type="expression patterns" value="Low tissue specificity"/>
</dbReference>
<dbReference type="MIM" id="612299">
    <property type="type" value="gene"/>
</dbReference>
<dbReference type="neXtProt" id="NX_Q9P000"/>
<dbReference type="OpenTargets" id="ENSG00000110442"/>
<dbReference type="PharmGKB" id="PA134930445"/>
<dbReference type="VEuPathDB" id="HostDB:ENSG00000110442"/>
<dbReference type="eggNOG" id="ENOG502RHPY">
    <property type="taxonomic scope" value="Eukaryota"/>
</dbReference>
<dbReference type="GeneTree" id="ENSGT00390000006218"/>
<dbReference type="HOGENOM" id="CLU_118635_0_0_1"/>
<dbReference type="InParanoid" id="Q9P000"/>
<dbReference type="OMA" id="SHHVLFY"/>
<dbReference type="OrthoDB" id="64318at2759"/>
<dbReference type="PAN-GO" id="Q9P000">
    <property type="GO annotations" value="0 GO annotations based on evolutionary models"/>
</dbReference>
<dbReference type="PhylomeDB" id="Q9P000"/>
<dbReference type="TreeFam" id="TF323880"/>
<dbReference type="PathwayCommons" id="Q9P000"/>
<dbReference type="Reactome" id="R-HSA-6798695">
    <property type="pathway name" value="Neutrophil degranulation"/>
</dbReference>
<dbReference type="Reactome" id="R-HSA-8951664">
    <property type="pathway name" value="Neddylation"/>
</dbReference>
<dbReference type="SignaLink" id="Q9P000"/>
<dbReference type="BioGRID-ORCS" id="29099">
    <property type="hits" value="13 hits in 1152 CRISPR screens"/>
</dbReference>
<dbReference type="ChiTaRS" id="COMMD9">
    <property type="organism name" value="human"/>
</dbReference>
<dbReference type="EvolutionaryTrace" id="Q9P000"/>
<dbReference type="GeneWiki" id="COMMD9"/>
<dbReference type="GenomeRNAi" id="29099"/>
<dbReference type="Pharos" id="Q9P000">
    <property type="development level" value="Tdark"/>
</dbReference>
<dbReference type="PRO" id="PR:Q9P000"/>
<dbReference type="Proteomes" id="UP000005640">
    <property type="component" value="Chromosome 11"/>
</dbReference>
<dbReference type="RNAct" id="Q9P000">
    <property type="molecule type" value="protein"/>
</dbReference>
<dbReference type="Bgee" id="ENSG00000110442">
    <property type="expression patterns" value="Expressed in hindlimb stylopod muscle and 202 other cell types or tissues"/>
</dbReference>
<dbReference type="ExpressionAtlas" id="Q9P000">
    <property type="expression patterns" value="baseline and differential"/>
</dbReference>
<dbReference type="GO" id="GO:0005829">
    <property type="term" value="C:cytosol"/>
    <property type="evidence" value="ECO:0000314"/>
    <property type="project" value="HPA"/>
</dbReference>
<dbReference type="GO" id="GO:0005576">
    <property type="term" value="C:extracellular region"/>
    <property type="evidence" value="ECO:0000304"/>
    <property type="project" value="Reactome"/>
</dbReference>
<dbReference type="GO" id="GO:1904813">
    <property type="term" value="C:ficolin-1-rich granule lumen"/>
    <property type="evidence" value="ECO:0000304"/>
    <property type="project" value="Reactome"/>
</dbReference>
<dbReference type="GO" id="GO:0005794">
    <property type="term" value="C:Golgi apparatus"/>
    <property type="evidence" value="ECO:0000314"/>
    <property type="project" value="HPA"/>
</dbReference>
<dbReference type="GO" id="GO:0005654">
    <property type="term" value="C:nucleoplasm"/>
    <property type="evidence" value="ECO:0000314"/>
    <property type="project" value="HPA"/>
</dbReference>
<dbReference type="GO" id="GO:0034774">
    <property type="term" value="C:secretory granule lumen"/>
    <property type="evidence" value="ECO:0000304"/>
    <property type="project" value="Reactome"/>
</dbReference>
<dbReference type="GO" id="GO:0042632">
    <property type="term" value="P:cholesterol homeostasis"/>
    <property type="evidence" value="ECO:0007669"/>
    <property type="project" value="Ensembl"/>
</dbReference>
<dbReference type="GO" id="GO:0006814">
    <property type="term" value="P:sodium ion transport"/>
    <property type="evidence" value="ECO:0007669"/>
    <property type="project" value="UniProtKB-KW"/>
</dbReference>
<dbReference type="CDD" id="cd04757">
    <property type="entry name" value="Commd9"/>
    <property type="match status" value="1"/>
</dbReference>
<dbReference type="InterPro" id="IPR017920">
    <property type="entry name" value="COMM"/>
</dbReference>
<dbReference type="InterPro" id="IPR037360">
    <property type="entry name" value="COMMD9"/>
</dbReference>
<dbReference type="InterPro" id="IPR048676">
    <property type="entry name" value="COMMD9_N"/>
</dbReference>
<dbReference type="PANTHER" id="PTHR15663">
    <property type="entry name" value="COMM DOMAIN-CONTAINING PROTEIN 9"/>
    <property type="match status" value="1"/>
</dbReference>
<dbReference type="PANTHER" id="PTHR15663:SF4">
    <property type="entry name" value="COMM DOMAIN-CONTAINING PROTEIN 9"/>
    <property type="match status" value="1"/>
</dbReference>
<dbReference type="Pfam" id="PF07258">
    <property type="entry name" value="COMM_domain"/>
    <property type="match status" value="1"/>
</dbReference>
<dbReference type="Pfam" id="PF20923">
    <property type="entry name" value="COMMD9_HN"/>
    <property type="match status" value="1"/>
</dbReference>
<dbReference type="PROSITE" id="PS51269">
    <property type="entry name" value="COMM"/>
    <property type="match status" value="1"/>
</dbReference>
<keyword id="KW-0002">3D-structure</keyword>
<keyword id="KW-0007">Acetylation</keyword>
<keyword id="KW-0025">Alternative splicing</keyword>
<keyword id="KW-0968">Cytoplasmic vesicle</keyword>
<keyword id="KW-0406">Ion transport</keyword>
<keyword id="KW-0539">Nucleus</keyword>
<keyword id="KW-1267">Proteomics identification</keyword>
<keyword id="KW-1185">Reference proteome</keyword>
<keyword id="KW-0915">Sodium</keyword>
<keyword id="KW-0739">Sodium transport</keyword>
<keyword id="KW-0804">Transcription</keyword>
<keyword id="KW-0805">Transcription regulation</keyword>
<keyword id="KW-0813">Transport</keyword>
<keyword id="KW-0833">Ubl conjugation pathway</keyword>
<protein>
    <recommendedName>
        <fullName>COMM domain-containing protein 9</fullName>
    </recommendedName>
</protein>
<name>COMD9_HUMAN</name>
<sequence>MAALTAEHFAALQSLLKASSKDVVRQLCQESFSSSALGLKKLLDVTCSSLSVTQEEAEELLQALHRLTRLVAFRDLSSAEAILALFPENFHQNLKNLLTKIILEHVSTWRTEAQANQISLPRLVDLDWRVDIKTSSDSISRMAVPTCLLQMKIQEDPSLCGDKPSISAVTVELSKETLDTMLDGLGRIRDQLSAVASK</sequence>
<proteinExistence type="evidence at protein level"/>
<comment type="function">
    <text evidence="2 5 8 9 11">Scaffold protein in the commander complex that is essential for endosomal recycling of transmembrane cargos; the commander complex is composed of the CCC subcomplex and the retriever subcomplex (PubMed:37172566, PubMed:38459129). May modulate activity of cullin-RING E3 ubiquitin ligase (CRL) complexes (PubMed:21778237). May down-regulate activation of NF-kappa-B (PubMed:15799966). Modulates Na(+) transport in epithelial cells by regulation of apical cell surface expression of amiloride-sensitive sodium channel (ENaC) subunits (PubMed:23637203).</text>
</comment>
<comment type="subunit">
    <text evidence="2 3 4 5 6 7 8 9">Component of the commander complex consisting of the CCC subcomplex and the retriever subcomplex (PubMed:37172566, PubMed:38459129, PubMed:25355947, PubMed:28892079, PubMed:15799966). Component of the CCC (COMMD/CCDC22/CCDC93) subcomplex consisting of COMMD1, COMMD2, COMMD3, COMMD4, COMMD5, COMMD6, COMMD7, COMMD8, COMMD9, COMMD10, CCDC22 and CCDC93; within the complex forms a heterodimer with COMMD7 (PubMed:37172566, PubMed:38459129, PubMed:15799966, PubMed:23563313, PubMed:25355947, PubMed:28892079). Interacts with RELB and NFKB1/p105 (PubMed:15799966). Interacts with CCDC22, CCDC93, SCNN1B, CUL1 (PubMed:21778237, PubMed:23563313, PubMed:23637203, PubMed:25355947, PubMed:28892079).</text>
</comment>
<comment type="interaction">
    <interactant intactId="EBI-1550510">
        <id>Q9P000</id>
    </interactant>
    <interactant intactId="EBI-3943153">
        <id>O60826</id>
        <label>CCDC22</label>
    </interactant>
    <organismsDiffer>false</organismsDiffer>
    <experiments>15</experiments>
</comment>
<comment type="interaction">
    <interactant intactId="EBI-1550510">
        <id>Q9P000</id>
    </interactant>
    <interactant intactId="EBI-1104769">
        <id>Q567U6</id>
        <label>CCDC93</label>
    </interactant>
    <organismsDiffer>false</organismsDiffer>
    <experiments>4</experiments>
</comment>
<comment type="interaction">
    <interactant intactId="EBI-1550510">
        <id>Q9P000</id>
    </interactant>
    <interactant intactId="EBI-1550081">
        <id>Q7Z4G1</id>
        <label>COMMD6</label>
    </interactant>
    <organismsDiffer>false</organismsDiffer>
    <experiments>9</experiments>
</comment>
<comment type="interaction">
    <interactant intactId="EBI-1550510">
        <id>Q9P000</id>
    </interactant>
    <interactant intactId="EBI-10303987">
        <id>Q9UHG0</id>
        <label>DCDC2</label>
    </interactant>
    <organismsDiffer>false</organismsDiffer>
    <experiments>3</experiments>
</comment>
<comment type="subcellular location">
    <subcellularLocation>
        <location evidence="3">Nucleus</location>
    </subcellularLocation>
    <subcellularLocation>
        <location evidence="3">Cytoplasmic vesicle</location>
    </subcellularLocation>
</comment>
<comment type="alternative products">
    <event type="alternative splicing"/>
    <isoform>
        <id>Q9P000-1</id>
        <name>1</name>
        <sequence type="displayed"/>
    </isoform>
    <isoform>
        <id>Q9P000-2</id>
        <name>2</name>
        <sequence type="described" ref="VSP_041499"/>
    </isoform>
</comment>
<comment type="tissue specificity">
    <text evidence="2">Ubiquitous.</text>
</comment>
<comment type="similarity">
    <text evidence="10">Belongs to the COMM domain-containing protein 9 family.</text>
</comment>